<proteinExistence type="evidence at transcript level"/>
<accession>Q6DCM9</accession>
<dbReference type="EMBL" id="BC077976">
    <property type="protein sequence ID" value="AAH77976.1"/>
    <property type="molecule type" value="mRNA"/>
</dbReference>
<dbReference type="RefSeq" id="NP_001087067.1">
    <property type="nucleotide sequence ID" value="NM_001093598.1"/>
</dbReference>
<dbReference type="RefSeq" id="XP_018117467.1">
    <property type="nucleotide sequence ID" value="XM_018261978.1"/>
</dbReference>
<dbReference type="SMR" id="Q6DCM9"/>
<dbReference type="DNASU" id="446902"/>
<dbReference type="GeneID" id="446902"/>
<dbReference type="KEGG" id="xla:446902"/>
<dbReference type="AGR" id="Xenbase:XB-GENE-6254872"/>
<dbReference type="CTD" id="446902"/>
<dbReference type="Xenbase" id="XB-GENE-6254872">
    <property type="gene designation" value="hpcal1.L"/>
</dbReference>
<dbReference type="OMA" id="SEINDWY"/>
<dbReference type="OrthoDB" id="191686at2759"/>
<dbReference type="Proteomes" id="UP000186698">
    <property type="component" value="Chromosome 5L"/>
</dbReference>
<dbReference type="Bgee" id="446902">
    <property type="expression patterns" value="Expressed in internal ear and 19 other cell types or tissues"/>
</dbReference>
<dbReference type="GO" id="GO:0005509">
    <property type="term" value="F:calcium ion binding"/>
    <property type="evidence" value="ECO:0000318"/>
    <property type="project" value="GO_Central"/>
</dbReference>
<dbReference type="GO" id="GO:0009966">
    <property type="term" value="P:regulation of signal transduction"/>
    <property type="evidence" value="ECO:0000318"/>
    <property type="project" value="GO_Central"/>
</dbReference>
<dbReference type="CDD" id="cd00051">
    <property type="entry name" value="EFh"/>
    <property type="match status" value="2"/>
</dbReference>
<dbReference type="FunFam" id="1.10.238.10:FF:000078">
    <property type="entry name" value="Hippocalcin-like 1"/>
    <property type="match status" value="1"/>
</dbReference>
<dbReference type="FunFam" id="1.10.238.10:FF:000072">
    <property type="entry name" value="Hippocalcin-like protein 1"/>
    <property type="match status" value="1"/>
</dbReference>
<dbReference type="Gene3D" id="1.10.238.10">
    <property type="entry name" value="EF-hand"/>
    <property type="match status" value="2"/>
</dbReference>
<dbReference type="InterPro" id="IPR011992">
    <property type="entry name" value="EF-hand-dom_pair"/>
</dbReference>
<dbReference type="InterPro" id="IPR018247">
    <property type="entry name" value="EF_Hand_1_Ca_BS"/>
</dbReference>
<dbReference type="InterPro" id="IPR002048">
    <property type="entry name" value="EF_hand_dom"/>
</dbReference>
<dbReference type="InterPro" id="IPR028846">
    <property type="entry name" value="Recoverin"/>
</dbReference>
<dbReference type="PANTHER" id="PTHR23055">
    <property type="entry name" value="CALCIUM BINDING PROTEINS"/>
    <property type="match status" value="1"/>
</dbReference>
<dbReference type="PANTHER" id="PTHR23055:SF79">
    <property type="entry name" value="HIPPOCALCIN-LIKE PROTEIN 1"/>
    <property type="match status" value="1"/>
</dbReference>
<dbReference type="Pfam" id="PF13499">
    <property type="entry name" value="EF-hand_7"/>
    <property type="match status" value="2"/>
</dbReference>
<dbReference type="PRINTS" id="PR00450">
    <property type="entry name" value="RECOVERIN"/>
</dbReference>
<dbReference type="SMART" id="SM00054">
    <property type="entry name" value="EFh"/>
    <property type="match status" value="3"/>
</dbReference>
<dbReference type="SUPFAM" id="SSF47473">
    <property type="entry name" value="EF-hand"/>
    <property type="match status" value="1"/>
</dbReference>
<dbReference type="PROSITE" id="PS00018">
    <property type="entry name" value="EF_HAND_1"/>
    <property type="match status" value="3"/>
</dbReference>
<dbReference type="PROSITE" id="PS50222">
    <property type="entry name" value="EF_HAND_2"/>
    <property type="match status" value="4"/>
</dbReference>
<comment type="miscellaneous">
    <text evidence="1">Probably binds two or three calcium ions.</text>
</comment>
<comment type="similarity">
    <text evidence="4">Belongs to the recoverin family.</text>
</comment>
<reference key="1">
    <citation type="submission" date="2004-07" db="EMBL/GenBank/DDBJ databases">
        <authorList>
            <consortium name="NIH - Xenopus Gene Collection (XGC) project"/>
        </authorList>
    </citation>
    <scope>NUCLEOTIDE SEQUENCE [LARGE SCALE MRNA]</scope>
    <source>
        <tissue>Embryo</tissue>
    </source>
</reference>
<feature type="initiator methionine" description="Removed" evidence="2">
    <location>
        <position position="1"/>
    </location>
</feature>
<feature type="chain" id="PRO_0000362078" description="Hippocalcin-like protein 1">
    <location>
        <begin position="2"/>
        <end position="193"/>
    </location>
</feature>
<feature type="domain" description="EF-hand 1" evidence="3">
    <location>
        <begin position="41"/>
        <end position="58"/>
    </location>
</feature>
<feature type="domain" description="EF-hand 2" evidence="3">
    <location>
        <begin position="60"/>
        <end position="95"/>
    </location>
</feature>
<feature type="domain" description="EF-hand 3" evidence="3">
    <location>
        <begin position="96"/>
        <end position="131"/>
    </location>
</feature>
<feature type="domain" description="EF-hand 4" evidence="3">
    <location>
        <begin position="144"/>
        <end position="179"/>
    </location>
</feature>
<feature type="binding site" evidence="3">
    <location>
        <position position="73"/>
    </location>
    <ligand>
        <name>Ca(2+)</name>
        <dbReference type="ChEBI" id="CHEBI:29108"/>
        <label>1</label>
    </ligand>
</feature>
<feature type="binding site" evidence="3">
    <location>
        <position position="75"/>
    </location>
    <ligand>
        <name>Ca(2+)</name>
        <dbReference type="ChEBI" id="CHEBI:29108"/>
        <label>1</label>
    </ligand>
</feature>
<feature type="binding site" evidence="3">
    <location>
        <position position="77"/>
    </location>
    <ligand>
        <name>Ca(2+)</name>
        <dbReference type="ChEBI" id="CHEBI:29108"/>
        <label>1</label>
    </ligand>
</feature>
<feature type="binding site" evidence="3">
    <location>
        <position position="79"/>
    </location>
    <ligand>
        <name>Ca(2+)</name>
        <dbReference type="ChEBI" id="CHEBI:29108"/>
        <label>1</label>
    </ligand>
</feature>
<feature type="binding site" evidence="3">
    <location>
        <position position="84"/>
    </location>
    <ligand>
        <name>Ca(2+)</name>
        <dbReference type="ChEBI" id="CHEBI:29108"/>
        <label>1</label>
    </ligand>
</feature>
<feature type="binding site" evidence="3">
    <location>
        <position position="109"/>
    </location>
    <ligand>
        <name>Ca(2+)</name>
        <dbReference type="ChEBI" id="CHEBI:29108"/>
        <label>2</label>
    </ligand>
</feature>
<feature type="binding site" evidence="3">
    <location>
        <position position="111"/>
    </location>
    <ligand>
        <name>Ca(2+)</name>
        <dbReference type="ChEBI" id="CHEBI:29108"/>
        <label>2</label>
    </ligand>
</feature>
<feature type="binding site" evidence="3">
    <location>
        <position position="113"/>
    </location>
    <ligand>
        <name>Ca(2+)</name>
        <dbReference type="ChEBI" id="CHEBI:29108"/>
        <label>2</label>
    </ligand>
</feature>
<feature type="binding site" evidence="3">
    <location>
        <position position="115"/>
    </location>
    <ligand>
        <name>Ca(2+)</name>
        <dbReference type="ChEBI" id="CHEBI:29108"/>
        <label>2</label>
    </ligand>
</feature>
<feature type="binding site" evidence="3">
    <location>
        <position position="120"/>
    </location>
    <ligand>
        <name>Ca(2+)</name>
        <dbReference type="ChEBI" id="CHEBI:29108"/>
        <label>2</label>
    </ligand>
</feature>
<feature type="binding site" evidence="3">
    <location>
        <position position="157"/>
    </location>
    <ligand>
        <name>Ca(2+)</name>
        <dbReference type="ChEBI" id="CHEBI:29108"/>
        <label>3</label>
    </ligand>
</feature>
<feature type="binding site" evidence="3">
    <location>
        <position position="159"/>
    </location>
    <ligand>
        <name>Ca(2+)</name>
        <dbReference type="ChEBI" id="CHEBI:29108"/>
        <label>3</label>
    </ligand>
</feature>
<feature type="binding site" evidence="3">
    <location>
        <position position="161"/>
    </location>
    <ligand>
        <name>Ca(2+)</name>
        <dbReference type="ChEBI" id="CHEBI:29108"/>
        <label>3</label>
    </ligand>
</feature>
<feature type="binding site" evidence="3">
    <location>
        <position position="163"/>
    </location>
    <ligand>
        <name>Ca(2+)</name>
        <dbReference type="ChEBI" id="CHEBI:29108"/>
        <label>3</label>
    </ligand>
</feature>
<feature type="binding site" evidence="3">
    <location>
        <position position="168"/>
    </location>
    <ligand>
        <name>Ca(2+)</name>
        <dbReference type="ChEBI" id="CHEBI:29108"/>
        <label>3</label>
    </ligand>
</feature>
<feature type="lipid moiety-binding region" description="N-myristoyl glycine" evidence="2">
    <location>
        <position position="2"/>
    </location>
</feature>
<gene>
    <name type="primary">hpcal1</name>
</gene>
<keyword id="KW-0106">Calcium</keyword>
<keyword id="KW-0449">Lipoprotein</keyword>
<keyword id="KW-0479">Metal-binding</keyword>
<keyword id="KW-0519">Myristate</keyword>
<keyword id="KW-1185">Reference proteome</keyword>
<keyword id="KW-0677">Repeat</keyword>
<sequence length="193" mass="22285">MGKQNSKLRPEILQDLRENTEFTDHELQEWYKGFLKDCPTGHLTVEEFKKIYANFFPYGDASKFAEHVFRTFDTNGDGTIDFREFIIALSVTSRGKLEQKLKWAFSMYDLDGNGYISRGEMLEIVQAIYKMVSSVMKMPEDESTPEKRTDKIFKQMDTNNDGKLSLEEFIKGAKSDPSIVRLLQCDPSSTSQF</sequence>
<organism>
    <name type="scientific">Xenopus laevis</name>
    <name type="common">African clawed frog</name>
    <dbReference type="NCBI Taxonomy" id="8355"/>
    <lineage>
        <taxon>Eukaryota</taxon>
        <taxon>Metazoa</taxon>
        <taxon>Chordata</taxon>
        <taxon>Craniata</taxon>
        <taxon>Vertebrata</taxon>
        <taxon>Euteleostomi</taxon>
        <taxon>Amphibia</taxon>
        <taxon>Batrachia</taxon>
        <taxon>Anura</taxon>
        <taxon>Pipoidea</taxon>
        <taxon>Pipidae</taxon>
        <taxon>Xenopodinae</taxon>
        <taxon>Xenopus</taxon>
        <taxon>Xenopus</taxon>
    </lineage>
</organism>
<evidence type="ECO:0000250" key="1"/>
<evidence type="ECO:0000255" key="2"/>
<evidence type="ECO:0000255" key="3">
    <source>
        <dbReference type="PROSITE-ProRule" id="PRU00448"/>
    </source>
</evidence>
<evidence type="ECO:0000305" key="4"/>
<name>HPCL1_XENLA</name>
<protein>
    <recommendedName>
        <fullName>Hippocalcin-like protein 1</fullName>
    </recommendedName>
</protein>